<evidence type="ECO:0000255" key="1">
    <source>
        <dbReference type="HAMAP-Rule" id="MF_00093"/>
    </source>
</evidence>
<accession>Q0AUB8</accession>
<gene>
    <name evidence="1" type="primary">prfA</name>
    <name type="ordered locus">Swol_2397</name>
</gene>
<name>RF1_SYNWW</name>
<protein>
    <recommendedName>
        <fullName evidence="1">Peptide chain release factor 1</fullName>
        <shortName evidence="1">RF-1</shortName>
    </recommendedName>
</protein>
<feature type="chain" id="PRO_0000263379" description="Peptide chain release factor 1">
    <location>
        <begin position="1"/>
        <end position="355"/>
    </location>
</feature>
<feature type="modified residue" description="N5-methylglutamine" evidence="1">
    <location>
        <position position="233"/>
    </location>
</feature>
<sequence>MLEKLDSLEEKYDELTHLLSQPEVLSDQARFQKLAKAHSALSDIVTMYREYKSLSRQLEDSKEMLVEEEDEEFRQMLADEIPQLQEKKASLEQELRILLLPQDPNDEKSVIMEIRAGTGGEEAALFAGDLFRMYSRYAEEQGWKIEIMDTHYTDIGGIKEIVFVVDGRGAYSKLKFESGVHRVQRIPVTESGGRIHTSAATVAVLPEAEEVEVAIDPNDLRIDVYCSSGPGGQSVNTTQSAVRITHVPTGEVVTCQDEKSQHKNKAKALRVLRARLKELLEEEKNAEMAGTRKNQVGSGDRSERIRTYNFPQGRVSDHRINLTLHRLESVLEGRLEEIINALIAHYQAERLKQVD</sequence>
<comment type="function">
    <text evidence="1">Peptide chain release factor 1 directs the termination of translation in response to the peptide chain termination codons UAG and UAA.</text>
</comment>
<comment type="subcellular location">
    <subcellularLocation>
        <location evidence="1">Cytoplasm</location>
    </subcellularLocation>
</comment>
<comment type="PTM">
    <text evidence="1">Methylated by PrmC. Methylation increases the termination efficiency of RF1.</text>
</comment>
<comment type="similarity">
    <text evidence="1">Belongs to the prokaryotic/mitochondrial release factor family.</text>
</comment>
<proteinExistence type="inferred from homology"/>
<dbReference type="EMBL" id="CP000448">
    <property type="protein sequence ID" value="ABI69686.1"/>
    <property type="molecule type" value="Genomic_DNA"/>
</dbReference>
<dbReference type="RefSeq" id="WP_011641770.1">
    <property type="nucleotide sequence ID" value="NC_008346.1"/>
</dbReference>
<dbReference type="SMR" id="Q0AUB8"/>
<dbReference type="STRING" id="335541.Swol_2397"/>
<dbReference type="KEGG" id="swo:Swol_2397"/>
<dbReference type="eggNOG" id="COG0216">
    <property type="taxonomic scope" value="Bacteria"/>
</dbReference>
<dbReference type="HOGENOM" id="CLU_036856_0_1_9"/>
<dbReference type="OrthoDB" id="9806673at2"/>
<dbReference type="Proteomes" id="UP000001968">
    <property type="component" value="Chromosome"/>
</dbReference>
<dbReference type="GO" id="GO:0005737">
    <property type="term" value="C:cytoplasm"/>
    <property type="evidence" value="ECO:0007669"/>
    <property type="project" value="UniProtKB-SubCell"/>
</dbReference>
<dbReference type="GO" id="GO:0016149">
    <property type="term" value="F:translation release factor activity, codon specific"/>
    <property type="evidence" value="ECO:0007669"/>
    <property type="project" value="UniProtKB-UniRule"/>
</dbReference>
<dbReference type="FunFam" id="3.30.160.20:FF:000004">
    <property type="entry name" value="Peptide chain release factor 1"/>
    <property type="match status" value="1"/>
</dbReference>
<dbReference type="FunFam" id="3.30.70.1660:FF:000002">
    <property type="entry name" value="Peptide chain release factor 1"/>
    <property type="match status" value="1"/>
</dbReference>
<dbReference type="FunFam" id="3.30.70.1660:FF:000004">
    <property type="entry name" value="Peptide chain release factor 1"/>
    <property type="match status" value="1"/>
</dbReference>
<dbReference type="Gene3D" id="3.30.160.20">
    <property type="match status" value="1"/>
</dbReference>
<dbReference type="Gene3D" id="3.30.70.1660">
    <property type="match status" value="1"/>
</dbReference>
<dbReference type="Gene3D" id="6.10.140.1950">
    <property type="match status" value="1"/>
</dbReference>
<dbReference type="HAMAP" id="MF_00093">
    <property type="entry name" value="Rel_fac_1"/>
    <property type="match status" value="1"/>
</dbReference>
<dbReference type="InterPro" id="IPR005139">
    <property type="entry name" value="PCRF"/>
</dbReference>
<dbReference type="InterPro" id="IPR000352">
    <property type="entry name" value="Pep_chain_release_fac_I"/>
</dbReference>
<dbReference type="InterPro" id="IPR045853">
    <property type="entry name" value="Pep_chain_release_fac_I_sf"/>
</dbReference>
<dbReference type="InterPro" id="IPR050057">
    <property type="entry name" value="Prokaryotic/Mito_RF"/>
</dbReference>
<dbReference type="InterPro" id="IPR004373">
    <property type="entry name" value="RF-1"/>
</dbReference>
<dbReference type="NCBIfam" id="TIGR00019">
    <property type="entry name" value="prfA"/>
    <property type="match status" value="1"/>
</dbReference>
<dbReference type="NCBIfam" id="NF001859">
    <property type="entry name" value="PRK00591.1"/>
    <property type="match status" value="1"/>
</dbReference>
<dbReference type="PANTHER" id="PTHR43804">
    <property type="entry name" value="LD18447P"/>
    <property type="match status" value="1"/>
</dbReference>
<dbReference type="PANTHER" id="PTHR43804:SF7">
    <property type="entry name" value="LD18447P"/>
    <property type="match status" value="1"/>
</dbReference>
<dbReference type="Pfam" id="PF03462">
    <property type="entry name" value="PCRF"/>
    <property type="match status" value="1"/>
</dbReference>
<dbReference type="Pfam" id="PF00472">
    <property type="entry name" value="RF-1"/>
    <property type="match status" value="1"/>
</dbReference>
<dbReference type="SMART" id="SM00937">
    <property type="entry name" value="PCRF"/>
    <property type="match status" value="1"/>
</dbReference>
<dbReference type="SUPFAM" id="SSF75620">
    <property type="entry name" value="Release factor"/>
    <property type="match status" value="1"/>
</dbReference>
<organism>
    <name type="scientific">Syntrophomonas wolfei subsp. wolfei (strain DSM 2245B / Goettingen)</name>
    <dbReference type="NCBI Taxonomy" id="335541"/>
    <lineage>
        <taxon>Bacteria</taxon>
        <taxon>Bacillati</taxon>
        <taxon>Bacillota</taxon>
        <taxon>Clostridia</taxon>
        <taxon>Eubacteriales</taxon>
        <taxon>Syntrophomonadaceae</taxon>
        <taxon>Syntrophomonas</taxon>
    </lineage>
</organism>
<keyword id="KW-0963">Cytoplasm</keyword>
<keyword id="KW-0488">Methylation</keyword>
<keyword id="KW-0648">Protein biosynthesis</keyword>
<keyword id="KW-1185">Reference proteome</keyword>
<reference key="1">
    <citation type="journal article" date="2010" name="Environ. Microbiol.">
        <title>The genome of Syntrophomonas wolfei: new insights into syntrophic metabolism and biohydrogen production.</title>
        <authorList>
            <person name="Sieber J.R."/>
            <person name="Sims D.R."/>
            <person name="Han C."/>
            <person name="Kim E."/>
            <person name="Lykidis A."/>
            <person name="Lapidus A.L."/>
            <person name="McDonnald E."/>
            <person name="Rohlin L."/>
            <person name="Culley D.E."/>
            <person name="Gunsalus R."/>
            <person name="McInerney M.J."/>
        </authorList>
    </citation>
    <scope>NUCLEOTIDE SEQUENCE [LARGE SCALE GENOMIC DNA]</scope>
    <source>
        <strain>DSM 2245B / Goettingen</strain>
    </source>
</reference>